<gene>
    <name evidence="1" type="primary">ubiC</name>
    <name type="ordered locus">BH11580</name>
</gene>
<keyword id="KW-0963">Cytoplasm</keyword>
<keyword id="KW-0456">Lyase</keyword>
<keyword id="KW-0670">Pyruvate</keyword>
<keyword id="KW-0831">Ubiquinone biosynthesis</keyword>
<reference key="1">
    <citation type="journal article" date="2004" name="Proc. Natl. Acad. Sci. U.S.A.">
        <title>The louse-borne human pathogen Bartonella quintana is a genomic derivative of the zoonotic agent Bartonella henselae.</title>
        <authorList>
            <person name="Alsmark U.C.M."/>
            <person name="Frank A.C."/>
            <person name="Karlberg E.O."/>
            <person name="Legault B.-A."/>
            <person name="Ardell D.H."/>
            <person name="Canbaeck B."/>
            <person name="Eriksson A.-S."/>
            <person name="Naeslund A.K."/>
            <person name="Handley S.A."/>
            <person name="Huvet M."/>
            <person name="La Scola B."/>
            <person name="Holmberg M."/>
            <person name="Andersson S.G.E."/>
        </authorList>
    </citation>
    <scope>NUCLEOTIDE SEQUENCE [LARGE SCALE GENOMIC DNA]</scope>
    <source>
        <strain>ATCC 49882 / DSM 28221 / CCUG 30454 / Houston 1</strain>
    </source>
</reference>
<sequence length="171" mass="20056">MSDPKDSILPPLKWLSDQDPPVPTHIKDWLMELGSMTRRFENHCTYIHIKPQRECFITRDKLKEEAAHLPKSTRYWLREVILMGDNQPWLLGRTVIPQETLFEHNEALINLGDVPLGRYLFSIDKLTRDYIHIGRKDTLWARRSRLRLTGKPLLLTELFLAASPLYTTNPI</sequence>
<organism>
    <name type="scientific">Bartonella henselae (strain ATCC 49882 / DSM 28221 / CCUG 30454 / Houston 1)</name>
    <name type="common">Rochalimaea henselae</name>
    <dbReference type="NCBI Taxonomy" id="283166"/>
    <lineage>
        <taxon>Bacteria</taxon>
        <taxon>Pseudomonadati</taxon>
        <taxon>Pseudomonadota</taxon>
        <taxon>Alphaproteobacteria</taxon>
        <taxon>Hyphomicrobiales</taxon>
        <taxon>Bartonellaceae</taxon>
        <taxon>Bartonella</taxon>
    </lineage>
</organism>
<accession>Q6G5M1</accession>
<name>UBIC_BARHE</name>
<comment type="function">
    <text evidence="1">Removes the pyruvyl group from chorismate, with concomitant aromatization of the ring, to provide 4-hydroxybenzoate (4HB) for the ubiquinone pathway.</text>
</comment>
<comment type="catalytic activity">
    <reaction evidence="1">
        <text>chorismate = 4-hydroxybenzoate + pyruvate</text>
        <dbReference type="Rhea" id="RHEA:16505"/>
        <dbReference type="ChEBI" id="CHEBI:15361"/>
        <dbReference type="ChEBI" id="CHEBI:17879"/>
        <dbReference type="ChEBI" id="CHEBI:29748"/>
        <dbReference type="EC" id="4.1.3.40"/>
    </reaction>
</comment>
<comment type="pathway">
    <text evidence="1">Cofactor biosynthesis; ubiquinone biosynthesis.</text>
</comment>
<comment type="subcellular location">
    <subcellularLocation>
        <location evidence="1">Cytoplasm</location>
    </subcellularLocation>
</comment>
<comment type="similarity">
    <text evidence="1">Belongs to the UbiC family.</text>
</comment>
<protein>
    <recommendedName>
        <fullName evidence="1">Probable chorismate pyruvate-lyase</fullName>
        <shortName evidence="1">CL</shortName>
        <shortName evidence="1">CPL</shortName>
        <ecNumber evidence="1">4.1.3.40</ecNumber>
    </recommendedName>
</protein>
<feature type="chain" id="PRO_0000240534" description="Probable chorismate pyruvate-lyase">
    <location>
        <begin position="1"/>
        <end position="171"/>
    </location>
</feature>
<feature type="binding site" evidence="1">
    <location>
        <position position="36"/>
    </location>
    <ligand>
        <name>substrate</name>
    </ligand>
</feature>
<feature type="binding site" evidence="1">
    <location>
        <position position="78"/>
    </location>
    <ligand>
        <name>substrate</name>
    </ligand>
</feature>
<feature type="binding site" evidence="1">
    <location>
        <position position="116"/>
    </location>
    <ligand>
        <name>substrate</name>
    </ligand>
</feature>
<feature type="binding site" evidence="1">
    <location>
        <position position="157"/>
    </location>
    <ligand>
        <name>substrate</name>
    </ligand>
</feature>
<evidence type="ECO:0000255" key="1">
    <source>
        <dbReference type="HAMAP-Rule" id="MF_01632"/>
    </source>
</evidence>
<proteinExistence type="inferred from homology"/>
<dbReference type="EC" id="4.1.3.40" evidence="1"/>
<dbReference type="EMBL" id="BX897699">
    <property type="protein sequence ID" value="CAF27941.1"/>
    <property type="molecule type" value="Genomic_DNA"/>
</dbReference>
<dbReference type="RefSeq" id="WP_011181000.1">
    <property type="nucleotide sequence ID" value="NZ_LRIJ02000001.1"/>
</dbReference>
<dbReference type="SMR" id="Q6G5M1"/>
<dbReference type="PaxDb" id="283166-BH11580"/>
<dbReference type="EnsemblBacteria" id="CAF27941">
    <property type="protein sequence ID" value="CAF27941"/>
    <property type="gene ID" value="BH11580"/>
</dbReference>
<dbReference type="GeneID" id="92985769"/>
<dbReference type="KEGG" id="bhe:BH11580"/>
<dbReference type="eggNOG" id="COG3161">
    <property type="taxonomic scope" value="Bacteria"/>
</dbReference>
<dbReference type="OrthoDB" id="9789493at2"/>
<dbReference type="UniPathway" id="UPA00232"/>
<dbReference type="Proteomes" id="UP000000421">
    <property type="component" value="Chromosome"/>
</dbReference>
<dbReference type="GO" id="GO:0005829">
    <property type="term" value="C:cytosol"/>
    <property type="evidence" value="ECO:0007669"/>
    <property type="project" value="TreeGrafter"/>
</dbReference>
<dbReference type="GO" id="GO:0008813">
    <property type="term" value="F:chorismate lyase activity"/>
    <property type="evidence" value="ECO:0007669"/>
    <property type="project" value="UniProtKB-UniRule"/>
</dbReference>
<dbReference type="GO" id="GO:0042866">
    <property type="term" value="P:pyruvate biosynthetic process"/>
    <property type="evidence" value="ECO:0007669"/>
    <property type="project" value="UniProtKB-UniRule"/>
</dbReference>
<dbReference type="GO" id="GO:0006744">
    <property type="term" value="P:ubiquinone biosynthetic process"/>
    <property type="evidence" value="ECO:0007669"/>
    <property type="project" value="UniProtKB-UniRule"/>
</dbReference>
<dbReference type="Gene3D" id="3.40.1410.10">
    <property type="entry name" value="Chorismate lyase-like"/>
    <property type="match status" value="1"/>
</dbReference>
<dbReference type="HAMAP" id="MF_01632">
    <property type="entry name" value="UbiC"/>
    <property type="match status" value="1"/>
</dbReference>
<dbReference type="InterPro" id="IPR007440">
    <property type="entry name" value="Chorismate--pyruvate_lyase"/>
</dbReference>
<dbReference type="InterPro" id="IPR028978">
    <property type="entry name" value="Chorismate_lyase_/UTRA_dom_sf"/>
</dbReference>
<dbReference type="NCBIfam" id="NF008656">
    <property type="entry name" value="PRK11655.1"/>
    <property type="match status" value="1"/>
</dbReference>
<dbReference type="PANTHER" id="PTHR38683">
    <property type="entry name" value="CHORISMATE PYRUVATE-LYASE"/>
    <property type="match status" value="1"/>
</dbReference>
<dbReference type="PANTHER" id="PTHR38683:SF1">
    <property type="entry name" value="CHORISMATE PYRUVATE-LYASE"/>
    <property type="match status" value="1"/>
</dbReference>
<dbReference type="Pfam" id="PF04345">
    <property type="entry name" value="Chor_lyase"/>
    <property type="match status" value="1"/>
</dbReference>
<dbReference type="SUPFAM" id="SSF64288">
    <property type="entry name" value="Chorismate lyase-like"/>
    <property type="match status" value="1"/>
</dbReference>